<keyword id="KW-0001">2Fe-2S</keyword>
<keyword id="KW-0408">Iron</keyword>
<keyword id="KW-0411">Iron-sulfur</keyword>
<keyword id="KW-0479">Metal-binding</keyword>
<keyword id="KW-0520">NAD</keyword>
<keyword id="KW-0874">Quinone</keyword>
<keyword id="KW-1185">Reference proteome</keyword>
<keyword id="KW-1278">Translocase</keyword>
<comment type="function">
    <text evidence="1">NDH-1 shuttles electrons from NADH, via FMN and iron-sulfur (Fe-S) centers, to quinones in the respiratory chain. Couples the redox reaction to proton translocation (for every two electrons transferred, four hydrogen ions are translocated across the cytoplasmic membrane), and thus conserves the redox energy in a proton gradient (By similarity).</text>
</comment>
<comment type="catalytic activity">
    <reaction>
        <text>a quinone + NADH + 5 H(+)(in) = a quinol + NAD(+) + 4 H(+)(out)</text>
        <dbReference type="Rhea" id="RHEA:57888"/>
        <dbReference type="ChEBI" id="CHEBI:15378"/>
        <dbReference type="ChEBI" id="CHEBI:24646"/>
        <dbReference type="ChEBI" id="CHEBI:57540"/>
        <dbReference type="ChEBI" id="CHEBI:57945"/>
        <dbReference type="ChEBI" id="CHEBI:132124"/>
    </reaction>
</comment>
<comment type="cofactor">
    <cofactor evidence="3">
        <name>[2Fe-2S] cluster</name>
        <dbReference type="ChEBI" id="CHEBI:190135"/>
    </cofactor>
    <text evidence="3">Binds 1 [2Fe-2S] cluster.</text>
</comment>
<comment type="similarity">
    <text evidence="3">Belongs to the complex I 24 kDa subunit family.</text>
</comment>
<name>NUOE_RICPR</name>
<protein>
    <recommendedName>
        <fullName>NADH-quinone oxidoreductase subunit E</fullName>
        <ecNumber>7.1.1.-</ecNumber>
    </recommendedName>
    <alternativeName>
        <fullName>NADH dehydrogenase I subunit E</fullName>
    </alternativeName>
    <alternativeName>
        <fullName>NDH-1 subunit E</fullName>
    </alternativeName>
</protein>
<proteinExistence type="inferred from homology"/>
<gene>
    <name type="primary">nuoE</name>
    <name type="ordered locus">RP353</name>
</gene>
<sequence length="177" mass="20462">MNTKITNFTFAFDKKNLNLAETIIKKYPPEGKRSAILPLLDLAQRQNGGWLHVSAIEYVANMLEMPYMRAYEVATFYTMFNLNPIGKYHIQVCTTTPCWLRGSDNIMKICEKKLAIKHKETTKDQKFTLSEIECLGACVNAPVVQINDDYYEDLNEAKMEKLIEQYLNEFKSKMQNG</sequence>
<dbReference type="EC" id="7.1.1.-"/>
<dbReference type="EMBL" id="AJ235271">
    <property type="protein sequence ID" value="CAA14813.1"/>
    <property type="molecule type" value="Genomic_DNA"/>
</dbReference>
<dbReference type="PIR" id="C71692">
    <property type="entry name" value="C71692"/>
</dbReference>
<dbReference type="RefSeq" id="NP_220737.1">
    <property type="nucleotide sequence ID" value="NC_000963.1"/>
</dbReference>
<dbReference type="RefSeq" id="WP_004597486.1">
    <property type="nucleotide sequence ID" value="NC_000963.1"/>
</dbReference>
<dbReference type="SMR" id="Q9ZDH5"/>
<dbReference type="STRING" id="272947.gene:17555433"/>
<dbReference type="EnsemblBacteria" id="CAA14813">
    <property type="protein sequence ID" value="CAA14813"/>
    <property type="gene ID" value="CAA14813"/>
</dbReference>
<dbReference type="GeneID" id="57569479"/>
<dbReference type="KEGG" id="rpr:RP353"/>
<dbReference type="PATRIC" id="fig|272947.5.peg.363"/>
<dbReference type="eggNOG" id="COG1905">
    <property type="taxonomic scope" value="Bacteria"/>
</dbReference>
<dbReference type="HOGENOM" id="CLU_054362_2_0_5"/>
<dbReference type="OrthoDB" id="9807941at2"/>
<dbReference type="Proteomes" id="UP000002480">
    <property type="component" value="Chromosome"/>
</dbReference>
<dbReference type="GO" id="GO:0051537">
    <property type="term" value="F:2 iron, 2 sulfur cluster binding"/>
    <property type="evidence" value="ECO:0007669"/>
    <property type="project" value="UniProtKB-KW"/>
</dbReference>
<dbReference type="GO" id="GO:0046872">
    <property type="term" value="F:metal ion binding"/>
    <property type="evidence" value="ECO:0007669"/>
    <property type="project" value="UniProtKB-KW"/>
</dbReference>
<dbReference type="GO" id="GO:0003954">
    <property type="term" value="F:NADH dehydrogenase activity"/>
    <property type="evidence" value="ECO:0007669"/>
    <property type="project" value="TreeGrafter"/>
</dbReference>
<dbReference type="GO" id="GO:0048038">
    <property type="term" value="F:quinone binding"/>
    <property type="evidence" value="ECO:0007669"/>
    <property type="project" value="UniProtKB-KW"/>
</dbReference>
<dbReference type="CDD" id="cd03064">
    <property type="entry name" value="TRX_Fd_NuoE"/>
    <property type="match status" value="1"/>
</dbReference>
<dbReference type="FunFam" id="3.40.30.10:FF:000022">
    <property type="entry name" value="NADH dehydrogenase flavoprotein 2, mitochondrial"/>
    <property type="match status" value="1"/>
</dbReference>
<dbReference type="FunFam" id="1.10.10.1590:FF:000001">
    <property type="entry name" value="NADH-quinone oxidoreductase subunit E"/>
    <property type="match status" value="1"/>
</dbReference>
<dbReference type="Gene3D" id="3.40.30.10">
    <property type="entry name" value="Glutaredoxin"/>
    <property type="match status" value="1"/>
</dbReference>
<dbReference type="Gene3D" id="1.10.10.1590">
    <property type="entry name" value="NADH-quinone oxidoreductase subunit E"/>
    <property type="match status" value="1"/>
</dbReference>
<dbReference type="InterPro" id="IPR002023">
    <property type="entry name" value="NuoE-like"/>
</dbReference>
<dbReference type="InterPro" id="IPR042128">
    <property type="entry name" value="NuoE_dom"/>
</dbReference>
<dbReference type="InterPro" id="IPR041921">
    <property type="entry name" value="NuoE_N"/>
</dbReference>
<dbReference type="InterPro" id="IPR036249">
    <property type="entry name" value="Thioredoxin-like_sf"/>
</dbReference>
<dbReference type="NCBIfam" id="TIGR01958">
    <property type="entry name" value="nuoE_fam"/>
    <property type="match status" value="1"/>
</dbReference>
<dbReference type="NCBIfam" id="NF005725">
    <property type="entry name" value="PRK07539.1-5"/>
    <property type="match status" value="1"/>
</dbReference>
<dbReference type="PANTHER" id="PTHR10371:SF3">
    <property type="entry name" value="NADH DEHYDROGENASE [UBIQUINONE] FLAVOPROTEIN 2, MITOCHONDRIAL"/>
    <property type="match status" value="1"/>
</dbReference>
<dbReference type="PANTHER" id="PTHR10371">
    <property type="entry name" value="NADH DEHYDROGENASE UBIQUINONE FLAVOPROTEIN 2, MITOCHONDRIAL"/>
    <property type="match status" value="1"/>
</dbReference>
<dbReference type="Pfam" id="PF01257">
    <property type="entry name" value="2Fe-2S_thioredx"/>
    <property type="match status" value="1"/>
</dbReference>
<dbReference type="PIRSF" id="PIRSF000216">
    <property type="entry name" value="NADH_DH_24kDa"/>
    <property type="match status" value="1"/>
</dbReference>
<dbReference type="SUPFAM" id="SSF52833">
    <property type="entry name" value="Thioredoxin-like"/>
    <property type="match status" value="1"/>
</dbReference>
<dbReference type="PROSITE" id="PS01099">
    <property type="entry name" value="COMPLEX1_24K"/>
    <property type="match status" value="1"/>
</dbReference>
<reference key="1">
    <citation type="journal article" date="1998" name="Nature">
        <title>The genome sequence of Rickettsia prowazekii and the origin of mitochondria.</title>
        <authorList>
            <person name="Andersson S.G.E."/>
            <person name="Zomorodipour A."/>
            <person name="Andersson J.O."/>
            <person name="Sicheritz-Ponten T."/>
            <person name="Alsmark U.C.M."/>
            <person name="Podowski R.M."/>
            <person name="Naeslund A.K."/>
            <person name="Eriksson A.-S."/>
            <person name="Winkler H.H."/>
            <person name="Kurland C.G."/>
        </authorList>
    </citation>
    <scope>NUCLEOTIDE SEQUENCE [LARGE SCALE GENOMIC DNA]</scope>
    <source>
        <strain>Madrid E</strain>
    </source>
</reference>
<organism>
    <name type="scientific">Rickettsia prowazekii (strain Madrid E)</name>
    <dbReference type="NCBI Taxonomy" id="272947"/>
    <lineage>
        <taxon>Bacteria</taxon>
        <taxon>Pseudomonadati</taxon>
        <taxon>Pseudomonadota</taxon>
        <taxon>Alphaproteobacteria</taxon>
        <taxon>Rickettsiales</taxon>
        <taxon>Rickettsiaceae</taxon>
        <taxon>Rickettsieae</taxon>
        <taxon>Rickettsia</taxon>
        <taxon>typhus group</taxon>
    </lineage>
</organism>
<accession>Q9ZDH5</accession>
<evidence type="ECO:0000250" key="1"/>
<evidence type="ECO:0000255" key="2"/>
<evidence type="ECO:0000305" key="3"/>
<feature type="chain" id="PRO_0000118701" description="NADH-quinone oxidoreductase subunit E">
    <location>
        <begin position="1"/>
        <end position="177"/>
    </location>
</feature>
<feature type="binding site" evidence="2">
    <location>
        <position position="93"/>
    </location>
    <ligand>
        <name>[2Fe-2S] cluster</name>
        <dbReference type="ChEBI" id="CHEBI:190135"/>
    </ligand>
</feature>
<feature type="binding site" evidence="2">
    <location>
        <position position="98"/>
    </location>
    <ligand>
        <name>[2Fe-2S] cluster</name>
        <dbReference type="ChEBI" id="CHEBI:190135"/>
    </ligand>
</feature>
<feature type="binding site" evidence="2">
    <location>
        <position position="134"/>
    </location>
    <ligand>
        <name>[2Fe-2S] cluster</name>
        <dbReference type="ChEBI" id="CHEBI:190135"/>
    </ligand>
</feature>
<feature type="binding site" evidence="2">
    <location>
        <position position="138"/>
    </location>
    <ligand>
        <name>[2Fe-2S] cluster</name>
        <dbReference type="ChEBI" id="CHEBI:190135"/>
    </ligand>
</feature>